<sequence length="767" mass="82850">MSLIQLSPSNGDLLLINSGSFSTGKVIRTRNELVFYTDQYGNSTGYRWLGNLPHVINGNSPQTDGGISSTSWESYITSNLYDKLKSENITLSGTAHLPTVEVAYGLKKGSLKVWSAGLVSSSSQYWLYTDGTVWSGVGVLGTEPDVPFTQIHLQRDIIKYNYIVQTDGETLINIPYDFTSIDVFINGVLQNSNSGSYKIIQSTIQFSDVLNKGDNIQFYLSNVPISSVRFALSSDLTNYVLKSDLSNTSGANNVGFYPGGTVQDAIVYTTPEMFGAIGDGITDDTNALQNAINFSKNKTLLFSNGKKYRTKNLIVPHPMTFKGLGRRQDGAIIPYGNVSSESFIHTGTLILLTTSSTVTFYDLTVDARGITLSFVDGQRLTGVGAADNNSGVYQSGLQMYNCNVSGFSGNNLYGGGSKSFGILKDCQFESSGKSCVRIDGVDWRISHCAIGRSLESYGIEILNENNFVSNCDSYFNKLSGIFYQQPTGMAFIKLIGNTINSNGQHGISCSLPYAQPAGTVITNNIFWNNSTELTGTYHNIDLNYGRGHIVENNVHKAYQATAGSDSARCGYCINLRNGATLSGFINDAIDPLYSYVIDKINVNSQNFANQNEISIGTGLSLTKTVSSDTSIGIKLNINSESYDRVQINPGKILLGNGSAEPTHGIQQLAAYPGITMGVLGLGVVGNYSSSVFRIGTHRIWSGGDNTLRTKYGADPTSATDGNILSVKVSVPSTATSTGIVGQWAADDTYLYICTAANTWKRVSINTW</sequence>
<reference key="1">
    <citation type="journal article" date="2014" name="Antimicrob. Agents Chemother.">
        <title>Identification of capsular types in carbapenem-resistant Klebsiella pneumoniae strains by wzc sequencing and implications in capsule depolymerase treatment.</title>
        <authorList>
            <person name="Pan Y.-J."/>
            <person name="Lin T.-L."/>
            <person name="Lin Y.-T."/>
            <person name="Su P.-A."/>
            <person name="Chen C.-T."/>
            <person name="Hsieh P.-F."/>
            <person name="Hsu C.-R."/>
            <person name="Chen C.-C."/>
            <person name="Hsieh Y.-C."/>
            <person name="Wang J.-T."/>
        </authorList>
    </citation>
    <scope>NUCLEOTIDE SEQUENCE [LARGE SCALE GENOMIC DNA]</scope>
</reference>
<reference key="2">
    <citation type="journal article" date="2017" name="J. Virol.">
        <title>Klebsiella Phage PhiK64-1 Encodes Multiple Depolymerases for Multiple Host Capsular Types.</title>
        <authorList>
            <person name="Pan Y.-J."/>
            <person name="Lin T.-L."/>
            <person name="Chen C.-C."/>
            <person name="Tsai Y.-T."/>
            <person name="Cheng Y.-H."/>
            <person name="Chen Y.-Y."/>
            <person name="Hsieh P.-F."/>
            <person name="Lin Y.-T."/>
            <person name="Wang J.-T."/>
        </authorList>
    </citation>
    <scope>NUCLEOTIDE SEQUENCE [GENOMIC DNA]</scope>
    <scope>FUNCTION</scope>
</reference>
<reference key="3">
    <citation type="journal article" date="2019" name="Front. Microbiol.">
        <title>Modeling the Architecture of Depolymerase-Containing Receptor Binding Proteins in Klebsiella Phages.</title>
        <authorList>
            <person name="Latka A."/>
            <person name="Leiman P.G."/>
            <person name="Drulis-Kawa Z."/>
            <person name="Briers Y."/>
        </authorList>
    </citation>
    <scope>REVIEW</scope>
</reference>
<name>DPO26_BPK64</name>
<dbReference type="EMBL" id="AB897757">
    <property type="protein sequence ID" value="BAQ02843.1"/>
    <property type="molecule type" value="Genomic_DNA"/>
</dbReference>
<dbReference type="EMBL" id="LC121105">
    <property type="protein sequence ID" value="BAW85699.1"/>
    <property type="molecule type" value="Genomic_DNA"/>
</dbReference>
<dbReference type="RefSeq" id="YP_009153203.1">
    <property type="nucleotide sequence ID" value="NC_027399.1"/>
</dbReference>
<dbReference type="SMR" id="A0A0A8J9B0"/>
<dbReference type="OrthoDB" id="5990at10239"/>
<dbReference type="Proteomes" id="UP000202478">
    <property type="component" value="Genome"/>
</dbReference>
<dbReference type="GO" id="GO:0098015">
    <property type="term" value="C:virus tail"/>
    <property type="evidence" value="ECO:0007669"/>
    <property type="project" value="UniProtKB-KW"/>
</dbReference>
<dbReference type="GO" id="GO:0016829">
    <property type="term" value="F:lyase activity"/>
    <property type="evidence" value="ECO:0007669"/>
    <property type="project" value="UniProtKB-KW"/>
</dbReference>
<dbReference type="GO" id="GO:0098671">
    <property type="term" value="P:adhesion receptor-mediated virion attachment to host cell"/>
    <property type="evidence" value="ECO:0007669"/>
    <property type="project" value="UniProtKB-KW"/>
</dbReference>
<dbReference type="GO" id="GO:0098994">
    <property type="term" value="P:symbiont entry into host cell via disruption of host cell envelope"/>
    <property type="evidence" value="ECO:0007669"/>
    <property type="project" value="UniProtKB-KW"/>
</dbReference>
<dbReference type="GO" id="GO:0098996">
    <property type="term" value="P:symbiont entry into host cell via disruption of host cell glycocalyx"/>
    <property type="evidence" value="ECO:0007669"/>
    <property type="project" value="UniProtKB-KW"/>
</dbReference>
<dbReference type="Gene3D" id="2.10.10.80">
    <property type="match status" value="1"/>
</dbReference>
<dbReference type="Gene3D" id="2.160.20.10">
    <property type="entry name" value="Single-stranded right-handed beta-helix, Pectin lyase-like"/>
    <property type="match status" value="1"/>
</dbReference>
<dbReference type="InterPro" id="IPR012334">
    <property type="entry name" value="Pectin_lyas_fold"/>
</dbReference>
<dbReference type="InterPro" id="IPR011050">
    <property type="entry name" value="Pectin_lyase_fold/virulence"/>
</dbReference>
<dbReference type="SUPFAM" id="SSF51126">
    <property type="entry name" value="Pectin lyase-like"/>
    <property type="match status" value="1"/>
</dbReference>
<protein>
    <recommendedName>
        <fullName evidence="2">Depolymerase, capsule K30/K69-specific</fullName>
    </recommendedName>
    <alternativeName>
        <fullName evidence="3">Probable tail spike protein</fullName>
    </alternativeName>
</protein>
<organism>
    <name type="scientific">Klebsiella phage K64-1</name>
    <name type="common">Bacteriophage K64-1</name>
    <dbReference type="NCBI Taxonomy" id="1439894"/>
    <lineage>
        <taxon>Viruses</taxon>
        <taxon>Duplodnaviria</taxon>
        <taxon>Heunggongvirae</taxon>
        <taxon>Uroviricota</taxon>
        <taxon>Caudoviricetes</taxon>
        <taxon>Alcyoneusvirus</taxon>
        <taxon>Alcyoneusvirus K641</taxon>
    </lineage>
</organism>
<proteinExistence type="inferred from homology"/>
<keyword id="KW-1238">Degradation of host capsule during virus entry</keyword>
<keyword id="KW-1235">Degradation of host cell envelope components during virus entry</keyword>
<keyword id="KW-0945">Host-virus interaction</keyword>
<keyword id="KW-0456">Lyase</keyword>
<keyword id="KW-1185">Reference proteome</keyword>
<keyword id="KW-1233">Viral attachment to host adhesion receptor</keyword>
<keyword id="KW-1161">Viral attachment to host cell</keyword>
<keyword id="KW-1227">Viral tail protein</keyword>
<keyword id="KW-0946">Virion</keyword>
<keyword id="KW-1160">Virus entry into host cell</keyword>
<accession>A0A0A8J9B0</accession>
<organismHost>
    <name type="scientific">Klebsiella</name>
    <dbReference type="NCBI Taxonomy" id="570"/>
</organismHost>
<evidence type="ECO:0000269" key="1">
    <source>
    </source>
</evidence>
<evidence type="ECO:0000303" key="2">
    <source>
    </source>
</evidence>
<evidence type="ECO:0000305" key="3"/>
<evidence type="ECO:0000305" key="4">
    <source>
    </source>
</evidence>
<evidence type="ECO:0000312" key="5">
    <source>
        <dbReference type="EMBL" id="BAW85699.1"/>
    </source>
</evidence>
<gene>
    <name evidence="5" type="primary">S2-6</name>
</gene>
<comment type="function">
    <text evidence="1 4">Functions as a receptor binding protein (RBP) and probably mediates the attachment to the host capsular exopolysaccharides (Probable). Displays a depolymerase activity that specifically degrades the K30/K69-type polysaccharides of Klebsiella pneumoniae capsule (PubMed:28077636).</text>
</comment>
<comment type="subcellular location">
    <subcellularLocation>
        <location evidence="3">Virion</location>
    </subcellularLocation>
    <text evidence="3">Tail appendage.</text>
</comment>
<comment type="similarity">
    <text evidence="3">In the C-terminal section; belongs to the K30/K69-specific depolymerase family.</text>
</comment>
<feature type="chain" id="PRO_0000458696" description="Depolymerase, capsule K30/K69-specific">
    <location>
        <begin position="1"/>
        <end position="767"/>
    </location>
</feature>